<comment type="function">
    <text evidence="1">Could be responsible for synthesis of pseudouridine from uracil-13 in transfer RNAs.</text>
</comment>
<comment type="catalytic activity">
    <reaction evidence="1">
        <text>uridine(13) in tRNA = pseudouridine(13) in tRNA</text>
        <dbReference type="Rhea" id="RHEA:42540"/>
        <dbReference type="Rhea" id="RHEA-COMP:10105"/>
        <dbReference type="Rhea" id="RHEA-COMP:10106"/>
        <dbReference type="ChEBI" id="CHEBI:65314"/>
        <dbReference type="ChEBI" id="CHEBI:65315"/>
        <dbReference type="EC" id="5.4.99.27"/>
    </reaction>
</comment>
<comment type="similarity">
    <text evidence="1">Belongs to the pseudouridine synthase TruD family.</text>
</comment>
<keyword id="KW-0413">Isomerase</keyword>
<keyword id="KW-1185">Reference proteome</keyword>
<keyword id="KW-0819">tRNA processing</keyword>
<proteinExistence type="inferred from homology"/>
<organism>
    <name type="scientific">Thermococcus gammatolerans (strain DSM 15229 / JCM 11827 / EJ3)</name>
    <dbReference type="NCBI Taxonomy" id="593117"/>
    <lineage>
        <taxon>Archaea</taxon>
        <taxon>Methanobacteriati</taxon>
        <taxon>Methanobacteriota</taxon>
        <taxon>Thermococci</taxon>
        <taxon>Thermococcales</taxon>
        <taxon>Thermococcaceae</taxon>
        <taxon>Thermococcus</taxon>
    </lineage>
</organism>
<feature type="chain" id="PRO_1000213517" description="Probable tRNA pseudouridine synthase D">
    <location>
        <begin position="1"/>
        <end position="415"/>
    </location>
</feature>
<feature type="domain" description="TRUD" evidence="1">
    <location>
        <begin position="158"/>
        <end position="378"/>
    </location>
</feature>
<feature type="active site" description="Nucleophile" evidence="1">
    <location>
        <position position="83"/>
    </location>
</feature>
<gene>
    <name evidence="1" type="primary">truD</name>
    <name type="ordered locus">TGAM_1877</name>
</gene>
<reference key="1">
    <citation type="journal article" date="2007" name="Genome Biol.">
        <title>Genome analysis and genome-wide proteomics of Thermococcus gammatolerans, the most radioresistant organism known amongst the Archaea.</title>
        <authorList>
            <person name="Zivanovic Y."/>
            <person name="Armengaud J."/>
            <person name="Lagorce A."/>
            <person name="Leplat C."/>
            <person name="Guerin P."/>
            <person name="Dutertre M."/>
            <person name="Anthouard V."/>
            <person name="Forterre P."/>
            <person name="Wincker P."/>
            <person name="Confalonieri F."/>
        </authorList>
    </citation>
    <scope>NUCLEOTIDE SEQUENCE [LARGE SCALE GENOMIC DNA]</scope>
    <source>
        <strain>DSM 15229 / JCM 11827 / EJ3</strain>
    </source>
</reference>
<evidence type="ECO:0000255" key="1">
    <source>
        <dbReference type="HAMAP-Rule" id="MF_01082"/>
    </source>
</evidence>
<dbReference type="EC" id="5.4.99.27" evidence="1"/>
<dbReference type="EMBL" id="CP001398">
    <property type="protein sequence ID" value="ACS34379.1"/>
    <property type="molecule type" value="Genomic_DNA"/>
</dbReference>
<dbReference type="RefSeq" id="WP_015859486.1">
    <property type="nucleotide sequence ID" value="NC_012804.1"/>
</dbReference>
<dbReference type="SMR" id="C5A1W0"/>
<dbReference type="STRING" id="593117.TGAM_1877"/>
<dbReference type="PaxDb" id="593117-TGAM_1877"/>
<dbReference type="GeneID" id="7988281"/>
<dbReference type="KEGG" id="tga:TGAM_1877"/>
<dbReference type="PATRIC" id="fig|593117.10.peg.1887"/>
<dbReference type="eggNOG" id="arCOG04252">
    <property type="taxonomic scope" value="Archaea"/>
</dbReference>
<dbReference type="HOGENOM" id="CLU_005281_4_1_2"/>
<dbReference type="OrthoDB" id="1798at2157"/>
<dbReference type="Proteomes" id="UP000001488">
    <property type="component" value="Chromosome"/>
</dbReference>
<dbReference type="GO" id="GO:0003723">
    <property type="term" value="F:RNA binding"/>
    <property type="evidence" value="ECO:0007669"/>
    <property type="project" value="InterPro"/>
</dbReference>
<dbReference type="GO" id="GO:0160150">
    <property type="term" value="F:tRNA pseudouridine(13) synthase activity"/>
    <property type="evidence" value="ECO:0007669"/>
    <property type="project" value="UniProtKB-EC"/>
</dbReference>
<dbReference type="GO" id="GO:0031119">
    <property type="term" value="P:tRNA pseudouridine synthesis"/>
    <property type="evidence" value="ECO:0007669"/>
    <property type="project" value="UniProtKB-UniRule"/>
</dbReference>
<dbReference type="CDD" id="cd01291">
    <property type="entry name" value="PseudoU_synth"/>
    <property type="match status" value="1"/>
</dbReference>
<dbReference type="FunFam" id="3.30.70.3160:FF:000001">
    <property type="entry name" value="Probable tRNA pseudouridine synthase D"/>
    <property type="match status" value="1"/>
</dbReference>
<dbReference type="Gene3D" id="1.10.1510.30">
    <property type="match status" value="1"/>
</dbReference>
<dbReference type="Gene3D" id="3.30.70.3160">
    <property type="match status" value="1"/>
</dbReference>
<dbReference type="Gene3D" id="3.30.2350.20">
    <property type="entry name" value="TruD, catalytic domain"/>
    <property type="match status" value="1"/>
</dbReference>
<dbReference type="HAMAP" id="MF_01082">
    <property type="entry name" value="TruD"/>
    <property type="match status" value="1"/>
</dbReference>
<dbReference type="InterPro" id="IPR020103">
    <property type="entry name" value="PsdUridine_synth_cat_dom_sf"/>
</dbReference>
<dbReference type="InterPro" id="IPR001656">
    <property type="entry name" value="PsdUridine_synth_TruD"/>
</dbReference>
<dbReference type="InterPro" id="IPR020119">
    <property type="entry name" value="PsdUridine_synth_TruD_CS"/>
</dbReference>
<dbReference type="InterPro" id="IPR011760">
    <property type="entry name" value="PsdUridine_synth_TruD_insert"/>
</dbReference>
<dbReference type="InterPro" id="IPR042214">
    <property type="entry name" value="TruD_catalytic"/>
</dbReference>
<dbReference type="NCBIfam" id="TIGR00094">
    <property type="entry name" value="tRNA_TruD_broad"/>
    <property type="match status" value="1"/>
</dbReference>
<dbReference type="PANTHER" id="PTHR13326:SF21">
    <property type="entry name" value="PSEUDOURIDYLATE SYNTHASE PUS7L"/>
    <property type="match status" value="1"/>
</dbReference>
<dbReference type="PANTHER" id="PTHR13326">
    <property type="entry name" value="TRNA PSEUDOURIDINE SYNTHASE D"/>
    <property type="match status" value="1"/>
</dbReference>
<dbReference type="Pfam" id="PF01142">
    <property type="entry name" value="TruD"/>
    <property type="match status" value="1"/>
</dbReference>
<dbReference type="PIRSF" id="PIRSF037016">
    <property type="entry name" value="Pseudouridin_synth_euk_prd"/>
    <property type="match status" value="1"/>
</dbReference>
<dbReference type="SUPFAM" id="SSF55120">
    <property type="entry name" value="Pseudouridine synthase"/>
    <property type="match status" value="1"/>
</dbReference>
<dbReference type="PROSITE" id="PS50984">
    <property type="entry name" value="TRUD"/>
    <property type="match status" value="1"/>
</dbReference>
<dbReference type="PROSITE" id="PS01268">
    <property type="entry name" value="UPF0024"/>
    <property type="match status" value="1"/>
</dbReference>
<name>TRUD_THEGJ</name>
<accession>C5A1W0</accession>
<protein>
    <recommendedName>
        <fullName evidence="1">Probable tRNA pseudouridine synthase D</fullName>
        <ecNumber evidence="1">5.4.99.27</ecNumber>
    </recommendedName>
    <alternativeName>
        <fullName evidence="1">tRNA pseudouridine(13) synthase</fullName>
    </alternativeName>
    <alternativeName>
        <fullName evidence="1">tRNA pseudouridylate synthase D</fullName>
    </alternativeName>
    <alternativeName>
        <fullName evidence="1">tRNA-uridine isomerase D</fullName>
    </alternativeName>
</protein>
<sequence>MDYREFFSQFRHLSEKPGIGGKIKILPEDFVVIEDPLPQIFEGRKHAIFLLKKRNWDTMAVIKEIAKRAGISHRDIGFAGTKDRHAVTYQYISVPAGAKEKVESIQIRDVELRFVSYGRFIKLGHLLGNRFRIIIRDVEGSAFDRTKEIIRELREKGGFPNYFGYQRFGERRVVNHLIGKLLLQGEFDEAARLFLGYADGSMEGDEARRNFWETEDVDRALEEFPRFLRYERTLLYTYKKTGSWKKAFLSLPLPIMRIFIHAYQSYLFNLYLSRRIEELPLNEPLVGDIVVQVKGGIPYRDRTYRVTETNLNFVREKVKRGEAMVSGPLFGFAMRRAKGIPGELEEEILEGEGITLDAFKKLPKPMAEPGRRRELLIRPIGLTYGYLPETGMCFRFFLPKGVYATSVLREIMKDH</sequence>